<keyword id="KW-0391">Immunity</keyword>
<keyword id="KW-0399">Innate immunity</keyword>
<keyword id="KW-1185">Reference proteome</keyword>
<accession>Q7T364</accession>
<comment type="function">
    <text evidence="1">Acts as a negative regulator of innate and adaptive immunity by maintaining immune homeostasis. Negative regulator of Toll-like receptor and T-cell receptor function. Prevents hyperresponsiveness of the immune system and maintains immune homeostasis. Inhibits jun/ap1 and NF-kappa-B activation. Promotes Fas-induced apoptosis (By similarity).</text>
</comment>
<comment type="domain">
    <text evidence="1">The central region was initially thought to constitute a DED (death effector) domain. However, 3D-structure data reveal a previously uncharacterized fold that is different from the predicted fold of a DED (death effector) domain. It consists of a large, hydrophobic central cavity that is poised for cofactor binding (By similarity).</text>
</comment>
<comment type="similarity">
    <text evidence="2">Belongs to the TNFAIP8 family. TNFAIP8L2 subfamily.</text>
</comment>
<feature type="chain" id="PRO_0000285774" description="Tumor necrosis factor, alpha-induced protein 8-like protein 2 B">
    <location>
        <begin position="1"/>
        <end position="186"/>
    </location>
</feature>
<sequence>METFSSKDMALKAQKKILSKMATKSMVQMIIDDTSSEILDELYRVSKEYTGNRSEAQKVVKDLIKVVVKIGVLFRHNRFNEEELKLAQNFQKKLRQGAMTAISFHEVDFTFDKTVMSDILTESRDMLLKLVNTHLTTKSHGRINHVFNHYADPELLTQLYNSSGPLKPHLNKICNGLNKLLENGTL</sequence>
<protein>
    <recommendedName>
        <fullName>Tumor necrosis factor, alpha-induced protein 8-like protein 2 B</fullName>
        <shortName>TIPE2 B</shortName>
        <shortName>TNF alpha-induced protein 8-like protein 2 B</shortName>
        <shortName>TNFAIP8-like protein 2 B</shortName>
    </recommendedName>
</protein>
<dbReference type="EMBL" id="BC053238">
    <property type="protein sequence ID" value="AAH53238.1"/>
    <property type="molecule type" value="mRNA"/>
</dbReference>
<dbReference type="RefSeq" id="NP_956668.1">
    <property type="nucleotide sequence ID" value="NM_200374.1"/>
</dbReference>
<dbReference type="SMR" id="Q7T364"/>
<dbReference type="FunCoup" id="Q7T364">
    <property type="interactions" value="155"/>
</dbReference>
<dbReference type="STRING" id="7955.ENSDARP00000067853"/>
<dbReference type="PaxDb" id="7955-ENSDARP00000067853"/>
<dbReference type="Ensembl" id="ENSDART00000067854">
    <property type="protein sequence ID" value="ENSDARP00000067853"/>
    <property type="gene ID" value="ENSDARG00000046148"/>
</dbReference>
<dbReference type="Ensembl" id="ENSDART00000150617">
    <property type="protein sequence ID" value="ENSDARP00000125388"/>
    <property type="gene ID" value="ENSDARG00000046148"/>
</dbReference>
<dbReference type="GeneID" id="393345"/>
<dbReference type="KEGG" id="dre:393345"/>
<dbReference type="AGR" id="ZFIN:ZDB-GENE-040426-1359"/>
<dbReference type="CTD" id="393345"/>
<dbReference type="ZFIN" id="ZDB-GENE-040426-1359">
    <property type="gene designation" value="tnfaip8l2b"/>
</dbReference>
<dbReference type="eggNOG" id="ENOG502QST4">
    <property type="taxonomic scope" value="Eukaryota"/>
</dbReference>
<dbReference type="HOGENOM" id="CLU_085918_1_0_1"/>
<dbReference type="InParanoid" id="Q7T364"/>
<dbReference type="OMA" id="HNRINHV"/>
<dbReference type="OrthoDB" id="10055976at2759"/>
<dbReference type="PhylomeDB" id="Q7T364"/>
<dbReference type="TreeFam" id="TF323415"/>
<dbReference type="Reactome" id="R-DRE-1483255">
    <property type="pathway name" value="PI Metabolism"/>
</dbReference>
<dbReference type="PRO" id="PR:Q7T364"/>
<dbReference type="Proteomes" id="UP000000437">
    <property type="component" value="Chromosome 16"/>
</dbReference>
<dbReference type="Bgee" id="ENSDARG00000046148">
    <property type="expression patterns" value="Expressed in zone of skin and 25 other cell types or tissues"/>
</dbReference>
<dbReference type="GO" id="GO:0005737">
    <property type="term" value="C:cytoplasm"/>
    <property type="evidence" value="ECO:0000318"/>
    <property type="project" value="GO_Central"/>
</dbReference>
<dbReference type="GO" id="GO:0045087">
    <property type="term" value="P:innate immune response"/>
    <property type="evidence" value="ECO:0007669"/>
    <property type="project" value="UniProtKB-KW"/>
</dbReference>
<dbReference type="GO" id="GO:0042981">
    <property type="term" value="P:regulation of apoptotic process"/>
    <property type="evidence" value="ECO:0007669"/>
    <property type="project" value="InterPro"/>
</dbReference>
<dbReference type="FunFam" id="1.20.1440.160:FF:000001">
    <property type="entry name" value="Tumor necrosis factor alpha-induced protein 8-like 1"/>
    <property type="match status" value="1"/>
</dbReference>
<dbReference type="Gene3D" id="1.20.1440.160">
    <property type="entry name" value="Tumor necrosis factor alpha-induced protein 8-like"/>
    <property type="match status" value="1"/>
</dbReference>
<dbReference type="InterPro" id="IPR008477">
    <property type="entry name" value="TNFAIP8-like"/>
</dbReference>
<dbReference type="InterPro" id="IPR038355">
    <property type="entry name" value="TNFAIP8_sf"/>
</dbReference>
<dbReference type="PANTHER" id="PTHR12757:SF4">
    <property type="entry name" value="TUMOR NECROSIS FACTOR ALPHA-INDUCED PROTEIN 8-LIKE PROTEIN 2"/>
    <property type="match status" value="1"/>
</dbReference>
<dbReference type="PANTHER" id="PTHR12757">
    <property type="entry name" value="TUMOR NECROSIS FACTOR INDUCED PROTEIN"/>
    <property type="match status" value="1"/>
</dbReference>
<dbReference type="Pfam" id="PF05527">
    <property type="entry name" value="DUF758"/>
    <property type="match status" value="1"/>
</dbReference>
<organism>
    <name type="scientific">Danio rerio</name>
    <name type="common">Zebrafish</name>
    <name type="synonym">Brachydanio rerio</name>
    <dbReference type="NCBI Taxonomy" id="7955"/>
    <lineage>
        <taxon>Eukaryota</taxon>
        <taxon>Metazoa</taxon>
        <taxon>Chordata</taxon>
        <taxon>Craniata</taxon>
        <taxon>Vertebrata</taxon>
        <taxon>Euteleostomi</taxon>
        <taxon>Actinopterygii</taxon>
        <taxon>Neopterygii</taxon>
        <taxon>Teleostei</taxon>
        <taxon>Ostariophysi</taxon>
        <taxon>Cypriniformes</taxon>
        <taxon>Danionidae</taxon>
        <taxon>Danioninae</taxon>
        <taxon>Danio</taxon>
    </lineage>
</organism>
<name>TPL2B_DANRE</name>
<gene>
    <name type="primary">tnfaip8l2b</name>
    <name type="synonym">tnfaip8l</name>
    <name type="synonym">tnfaip8l2</name>
    <name type="ORF">zgc:64074</name>
</gene>
<evidence type="ECO:0000250" key="1"/>
<evidence type="ECO:0000305" key="2"/>
<reference key="1">
    <citation type="submission" date="2003-06" db="EMBL/GenBank/DDBJ databases">
        <authorList>
            <consortium name="NIH - Zebrafish Gene Collection (ZGC) project"/>
        </authorList>
    </citation>
    <scope>NUCLEOTIDE SEQUENCE [LARGE SCALE MRNA]</scope>
    <source>
        <tissue>Kidney</tissue>
    </source>
</reference>
<proteinExistence type="evidence at transcript level"/>